<gene>
    <name type="primary">CSLD3</name>
    <name type="ordered locus">Os08g0345500</name>
    <name type="ordered locus">LOC_Os08g25710</name>
    <name type="ORF">OsJ_025895</name>
    <name type="ORF">P0410E11.117</name>
</gene>
<protein>
    <recommendedName>
        <fullName>Cellulose synthase-like protein D3</fullName>
        <ecNumber>2.4.1.-</ecNumber>
    </recommendedName>
    <alternativeName>
        <fullName>OsCslD3</fullName>
    </alternativeName>
</protein>
<sequence>MSTGPGKKAIRNAGGVGGGAGPSAGGPRGPAGQAVKFARRTSSGRYVSLSREDIDMEGELAADYTNYTVQIPPTPDNQPMLNGAEPASVAMKAEEQYVSNSLFTGGFNSATRAHLMDKVIESSVSHPQMAGAKGSRCAMPACDGSAMRNERGEDVDPCECHFKICRDCYLDAQKDGCICPGCKEHYKIGEYADDDPHDGKLHLPGPGGGGNKSLLARNQNGEFDHNRWLFESSGTYGYGNAFWPKGGMYDDDLDDDVDKLGGDGGGGGGGGPLPEQKPFKPLTRKIPMPTSVISPYRIFIVIRMFVLLFYLTWRIRNPNMEALWLWGMSIVCELWFAFSWLLDMLPKVNPVNRSTDLAVLKEKFETPSPSNPHGRSDLPGLDVFVSTADPEKEPVLTTATTILSILAVDYPVEKLACYVSDDGGALLTFEAMAEAASFANVWVPFCKKHDIEPRNPDSYFSVKGDPTKGKRRNDFVKDRRRVKREFDEFKVRINGLPDSIRRRSDAFNAREDMKMLKHLRETGADPSEQPKVKKATWMADGSHWPGTWAASAPDHAKGNHAGILQVMLKPPSPDPLYGMHDDDQMIDFSDVDIRLPMLVYMSREKRPGYDHNKKAGAMNALVRCSAVMSNGPFMLNFDCDHYINNAQAVREAMCFFMDRGGERIAYIQFPQRFEGIDPSDRYANNNTVFFDGNMRALDGLQGPMYVGTGCMFRRFAVYGFDPPRTAEYTGWLFTKKKVTTFKDPESDTQTLKAEDFDAELTSHLVPRRFGNSSPFMASIPVAEFQARPLADHPAVLHGRPSGALTVPRPPLDPPTVAEAVSVISCWYEDKTEWGDRVGWIYGSVTEDVVTGYRMHNRGWRSVYCITKRDAFLGTAPINLTDRLHQVLRWATGSVEIFFSRNNAFLASRKLMLLQRISYLNVGIYPFTSIFLLVYCFIPALSLFSGFFIVQKLDIAFLCYLLTMTITLVALGILEVKWSGIELEDWWRNEQFWLISGTSAHLYAVVQGLLKVMAGIEISFTLTAKAAADDNEDIYADLYIVKWSSLLIPPITIGMVNIIAIAFAFARTIYSDNPRWGKFIGGGFFSFWVLAHLNPFAKGLMGRRGKTPTIVFVWSGLLSITVSLLWVAISPPEANSNGGARGGGFQFP</sequence>
<dbReference type="EC" id="2.4.1.-"/>
<dbReference type="EMBL" id="AP004459">
    <property type="protein sequence ID" value="BAD01697.1"/>
    <property type="status" value="ALT_SEQ"/>
    <property type="molecule type" value="Genomic_DNA"/>
</dbReference>
<dbReference type="EMBL" id="AP014964">
    <property type="status" value="NOT_ANNOTATED_CDS"/>
    <property type="molecule type" value="Genomic_DNA"/>
</dbReference>
<dbReference type="EMBL" id="CM000145">
    <property type="protein sequence ID" value="EAZ42412.1"/>
    <property type="status" value="ALT_SEQ"/>
    <property type="molecule type" value="Genomic_DNA"/>
</dbReference>
<dbReference type="EMBL" id="BK000093">
    <property type="protein sequence ID" value="DAA01756.1"/>
    <property type="molecule type" value="Genomic_DNA"/>
</dbReference>
<dbReference type="SMR" id="Q7EZW6"/>
<dbReference type="FunCoup" id="Q7EZW6">
    <property type="interactions" value="49"/>
</dbReference>
<dbReference type="STRING" id="39947.Q7EZW6"/>
<dbReference type="PaxDb" id="39947-Q7EZW6"/>
<dbReference type="GeneID" id="9271833"/>
<dbReference type="KEGG" id="osa:9271833"/>
<dbReference type="eggNOG" id="ENOG502QTM8">
    <property type="taxonomic scope" value="Eukaryota"/>
</dbReference>
<dbReference type="HOGENOM" id="CLU_001418_1_0_1"/>
<dbReference type="InParanoid" id="Q7EZW6"/>
<dbReference type="OrthoDB" id="72851at2759"/>
<dbReference type="PlantReactome" id="R-OSA-1119314">
    <property type="pathway name" value="Cellulose biosynthesis"/>
</dbReference>
<dbReference type="Proteomes" id="UP000000763">
    <property type="component" value="Chromosome 8"/>
</dbReference>
<dbReference type="Proteomes" id="UP000007752">
    <property type="component" value="Chromosome 8"/>
</dbReference>
<dbReference type="Proteomes" id="UP000059680">
    <property type="component" value="Chromosome 8"/>
</dbReference>
<dbReference type="GO" id="GO:0000139">
    <property type="term" value="C:Golgi membrane"/>
    <property type="evidence" value="ECO:0007669"/>
    <property type="project" value="UniProtKB-SubCell"/>
</dbReference>
<dbReference type="GO" id="GO:0005886">
    <property type="term" value="C:plasma membrane"/>
    <property type="evidence" value="ECO:0000318"/>
    <property type="project" value="GO_Central"/>
</dbReference>
<dbReference type="GO" id="GO:0016760">
    <property type="term" value="F:cellulose synthase (UDP-forming) activity"/>
    <property type="evidence" value="ECO:0007669"/>
    <property type="project" value="InterPro"/>
</dbReference>
<dbReference type="GO" id="GO:0071555">
    <property type="term" value="P:cell wall organization"/>
    <property type="evidence" value="ECO:0007669"/>
    <property type="project" value="UniProtKB-KW"/>
</dbReference>
<dbReference type="GO" id="GO:0030244">
    <property type="term" value="P:cellulose biosynthetic process"/>
    <property type="evidence" value="ECO:0007669"/>
    <property type="project" value="InterPro"/>
</dbReference>
<dbReference type="GO" id="GO:0009833">
    <property type="term" value="P:plant-type primary cell wall biogenesis"/>
    <property type="evidence" value="ECO:0000318"/>
    <property type="project" value="GO_Central"/>
</dbReference>
<dbReference type="FunFam" id="3.30.40.10:FF:000229">
    <property type="entry name" value="Cellulose synthase-like protein D3"/>
    <property type="match status" value="1"/>
</dbReference>
<dbReference type="FunFam" id="3.90.550.10:FF:000089">
    <property type="entry name" value="Cellulose synthase-like protein D4"/>
    <property type="match status" value="1"/>
</dbReference>
<dbReference type="Gene3D" id="3.90.550.10">
    <property type="entry name" value="Spore Coat Polysaccharide Biosynthesis Protein SpsA, Chain A"/>
    <property type="match status" value="1"/>
</dbReference>
<dbReference type="Gene3D" id="3.30.40.10">
    <property type="entry name" value="Zinc/RING finger domain, C3HC4 (zinc finger)"/>
    <property type="match status" value="1"/>
</dbReference>
<dbReference type="InterPro" id="IPR005150">
    <property type="entry name" value="Cellulose_synth"/>
</dbReference>
<dbReference type="InterPro" id="IPR029044">
    <property type="entry name" value="Nucleotide-diphossugar_trans"/>
</dbReference>
<dbReference type="InterPro" id="IPR013083">
    <property type="entry name" value="Znf_RING/FYVE/PHD"/>
</dbReference>
<dbReference type="PANTHER" id="PTHR13301">
    <property type="entry name" value="X-BOX TRANSCRIPTION FACTOR-RELATED"/>
    <property type="match status" value="1"/>
</dbReference>
<dbReference type="Pfam" id="PF03552">
    <property type="entry name" value="Cellulose_synt"/>
    <property type="match status" value="1"/>
</dbReference>
<dbReference type="Pfam" id="PF14570">
    <property type="entry name" value="zf-RING_4"/>
    <property type="match status" value="1"/>
</dbReference>
<dbReference type="SUPFAM" id="SSF57850">
    <property type="entry name" value="RING/U-box"/>
    <property type="match status" value="1"/>
</dbReference>
<feature type="chain" id="PRO_0000319394" description="Cellulose synthase-like protein D3">
    <location>
        <begin position="1"/>
        <end position="1147"/>
    </location>
</feature>
<feature type="transmembrane region" description="Helical" evidence="1">
    <location>
        <begin position="292"/>
        <end position="312"/>
    </location>
</feature>
<feature type="transmembrane region" description="Helical" evidence="1">
    <location>
        <begin position="322"/>
        <end position="342"/>
    </location>
</feature>
<feature type="transmembrane region" description="Helical" evidence="1">
    <location>
        <begin position="929"/>
        <end position="949"/>
    </location>
</feature>
<feature type="transmembrane region" description="Helical" evidence="1">
    <location>
        <begin position="954"/>
        <end position="974"/>
    </location>
</feature>
<feature type="transmembrane region" description="Helical" evidence="1">
    <location>
        <begin position="1001"/>
        <end position="1021"/>
    </location>
</feature>
<feature type="transmembrane region" description="Helical" evidence="1">
    <location>
        <begin position="1045"/>
        <end position="1065"/>
    </location>
</feature>
<feature type="transmembrane region" description="Helical" evidence="1">
    <location>
        <begin position="1075"/>
        <end position="1095"/>
    </location>
</feature>
<feature type="transmembrane region" description="Helical" evidence="1">
    <location>
        <begin position="1108"/>
        <end position="1128"/>
    </location>
</feature>
<feature type="region of interest" description="Disordered" evidence="2">
    <location>
        <begin position="1"/>
        <end position="33"/>
    </location>
</feature>
<feature type="region of interest" description="Disordered" evidence="2">
    <location>
        <begin position="259"/>
        <end position="281"/>
    </location>
</feature>
<feature type="compositionally biased region" description="Gly residues" evidence="2">
    <location>
        <begin position="14"/>
        <end position="29"/>
    </location>
</feature>
<feature type="compositionally biased region" description="Gly residues" evidence="2">
    <location>
        <begin position="262"/>
        <end position="272"/>
    </location>
</feature>
<feature type="active site" evidence="1">
    <location>
        <position position="422"/>
    </location>
</feature>
<feature type="active site" evidence="1">
    <location>
        <position position="847"/>
    </location>
</feature>
<evidence type="ECO:0000255" key="1"/>
<evidence type="ECO:0000256" key="2">
    <source>
        <dbReference type="SAM" id="MobiDB-lite"/>
    </source>
</evidence>
<evidence type="ECO:0000305" key="3"/>
<accession>Q7EZW6</accession>
<accession>Q7PC66</accession>
<name>CSLD3_ORYSJ</name>
<comment type="function">
    <text>Thought to be a Golgi-localized beta-glycan synthase that polymerize the backbones of noncellulosic polysaccharides (hemicelluloses) of plant cell wall.</text>
</comment>
<comment type="subcellular location">
    <subcellularLocation>
        <location evidence="3">Golgi apparatus membrane</location>
        <topology evidence="3">Multi-pass membrane protein</topology>
    </subcellularLocation>
</comment>
<comment type="similarity">
    <text evidence="3">Belongs to the glycosyltransferase 2 family. Plant cellulose synthase-like D subfamily.</text>
</comment>
<comment type="sequence caution" evidence="3">
    <conflict type="erroneous gene model prediction">
        <sequence resource="EMBL-CDS" id="BAD01697"/>
    </conflict>
</comment>
<comment type="sequence caution" evidence="3">
    <conflict type="erroneous gene model prediction">
        <sequence resource="EMBL-CDS" id="EAZ42412"/>
    </conflict>
</comment>
<keyword id="KW-0961">Cell wall biogenesis/degradation</keyword>
<keyword id="KW-0328">Glycosyltransferase</keyword>
<keyword id="KW-0333">Golgi apparatus</keyword>
<keyword id="KW-0472">Membrane</keyword>
<keyword id="KW-1185">Reference proteome</keyword>
<keyword id="KW-0808">Transferase</keyword>
<keyword id="KW-0812">Transmembrane</keyword>
<keyword id="KW-1133">Transmembrane helix</keyword>
<reference key="1">
    <citation type="journal article" date="2005" name="Nature">
        <title>The map-based sequence of the rice genome.</title>
        <authorList>
            <consortium name="International rice genome sequencing project (IRGSP)"/>
        </authorList>
    </citation>
    <scope>NUCLEOTIDE SEQUENCE [LARGE SCALE GENOMIC DNA]</scope>
    <source>
        <strain>cv. Nipponbare</strain>
    </source>
</reference>
<reference key="2">
    <citation type="journal article" date="2013" name="Rice">
        <title>Improvement of the Oryza sativa Nipponbare reference genome using next generation sequence and optical map data.</title>
        <authorList>
            <person name="Kawahara Y."/>
            <person name="de la Bastide M."/>
            <person name="Hamilton J.P."/>
            <person name="Kanamori H."/>
            <person name="McCombie W.R."/>
            <person name="Ouyang S."/>
            <person name="Schwartz D.C."/>
            <person name="Tanaka T."/>
            <person name="Wu J."/>
            <person name="Zhou S."/>
            <person name="Childs K.L."/>
            <person name="Davidson R.M."/>
            <person name="Lin H."/>
            <person name="Quesada-Ocampo L."/>
            <person name="Vaillancourt B."/>
            <person name="Sakai H."/>
            <person name="Lee S.S."/>
            <person name="Kim J."/>
            <person name="Numa H."/>
            <person name="Itoh T."/>
            <person name="Buell C.R."/>
            <person name="Matsumoto T."/>
        </authorList>
    </citation>
    <scope>GENOME REANNOTATION</scope>
    <source>
        <strain>cv. Nipponbare</strain>
    </source>
</reference>
<reference key="3">
    <citation type="journal article" date="2005" name="PLoS Biol.">
        <title>The genomes of Oryza sativa: a history of duplications.</title>
        <authorList>
            <person name="Yu J."/>
            <person name="Wang J."/>
            <person name="Lin W."/>
            <person name="Li S."/>
            <person name="Li H."/>
            <person name="Zhou J."/>
            <person name="Ni P."/>
            <person name="Dong W."/>
            <person name="Hu S."/>
            <person name="Zeng C."/>
            <person name="Zhang J."/>
            <person name="Zhang Y."/>
            <person name="Li R."/>
            <person name="Xu Z."/>
            <person name="Li S."/>
            <person name="Li X."/>
            <person name="Zheng H."/>
            <person name="Cong L."/>
            <person name="Lin L."/>
            <person name="Yin J."/>
            <person name="Geng J."/>
            <person name="Li G."/>
            <person name="Shi J."/>
            <person name="Liu J."/>
            <person name="Lv H."/>
            <person name="Li J."/>
            <person name="Wang J."/>
            <person name="Deng Y."/>
            <person name="Ran L."/>
            <person name="Shi X."/>
            <person name="Wang X."/>
            <person name="Wu Q."/>
            <person name="Li C."/>
            <person name="Ren X."/>
            <person name="Wang J."/>
            <person name="Wang X."/>
            <person name="Li D."/>
            <person name="Liu D."/>
            <person name="Zhang X."/>
            <person name="Ji Z."/>
            <person name="Zhao W."/>
            <person name="Sun Y."/>
            <person name="Zhang Z."/>
            <person name="Bao J."/>
            <person name="Han Y."/>
            <person name="Dong L."/>
            <person name="Ji J."/>
            <person name="Chen P."/>
            <person name="Wu S."/>
            <person name="Liu J."/>
            <person name="Xiao Y."/>
            <person name="Bu D."/>
            <person name="Tan J."/>
            <person name="Yang L."/>
            <person name="Ye C."/>
            <person name="Zhang J."/>
            <person name="Xu J."/>
            <person name="Zhou Y."/>
            <person name="Yu Y."/>
            <person name="Zhang B."/>
            <person name="Zhuang S."/>
            <person name="Wei H."/>
            <person name="Liu B."/>
            <person name="Lei M."/>
            <person name="Yu H."/>
            <person name="Li Y."/>
            <person name="Xu H."/>
            <person name="Wei S."/>
            <person name="He X."/>
            <person name="Fang L."/>
            <person name="Zhang Z."/>
            <person name="Zhang Y."/>
            <person name="Huang X."/>
            <person name="Su Z."/>
            <person name="Tong W."/>
            <person name="Li J."/>
            <person name="Tong Z."/>
            <person name="Li S."/>
            <person name="Ye J."/>
            <person name="Wang L."/>
            <person name="Fang L."/>
            <person name="Lei T."/>
            <person name="Chen C.-S."/>
            <person name="Chen H.-C."/>
            <person name="Xu Z."/>
            <person name="Li H."/>
            <person name="Huang H."/>
            <person name="Zhang F."/>
            <person name="Xu H."/>
            <person name="Li N."/>
            <person name="Zhao C."/>
            <person name="Li S."/>
            <person name="Dong L."/>
            <person name="Huang Y."/>
            <person name="Li L."/>
            <person name="Xi Y."/>
            <person name="Qi Q."/>
            <person name="Li W."/>
            <person name="Zhang B."/>
            <person name="Hu W."/>
            <person name="Zhang Y."/>
            <person name="Tian X."/>
            <person name="Jiao Y."/>
            <person name="Liang X."/>
            <person name="Jin J."/>
            <person name="Gao L."/>
            <person name="Zheng W."/>
            <person name="Hao B."/>
            <person name="Liu S.-M."/>
            <person name="Wang W."/>
            <person name="Yuan L."/>
            <person name="Cao M."/>
            <person name="McDermott J."/>
            <person name="Samudrala R."/>
            <person name="Wang J."/>
            <person name="Wong G.K.-S."/>
            <person name="Yang H."/>
        </authorList>
    </citation>
    <scope>NUCLEOTIDE SEQUENCE [LARGE SCALE GENOMIC DNA]</scope>
    <source>
        <strain>cv. Nipponbare</strain>
    </source>
</reference>
<reference key="4">
    <citation type="journal article" date="2002" name="Plant Physiol.">
        <title>Cellulose synthase-like genes of rice.</title>
        <authorList>
            <person name="Hazen S.P."/>
            <person name="Scott-Craig J.S."/>
            <person name="Walton J.D."/>
        </authorList>
    </citation>
    <scope>IDENTIFICATION</scope>
</reference>
<reference key="5">
    <citation type="journal article" date="2007" name="Plant Physiol.">
        <title>OsCSLD1, a cellulose synthase-like D1 gene, is required for root hair morphogenesis in rice.</title>
        <authorList>
            <person name="Kim C.M."/>
            <person name="Park S.H."/>
            <person name="Je B.I."/>
            <person name="Park S.H."/>
            <person name="Park S.J."/>
            <person name="Piao H.L."/>
            <person name="Eun M.Y."/>
            <person name="Dolan L."/>
            <person name="Han C.-D."/>
        </authorList>
    </citation>
    <scope>TISSUE SPECIFICITY</scope>
</reference>
<proteinExistence type="evidence at transcript level"/>
<organism>
    <name type="scientific">Oryza sativa subsp. japonica</name>
    <name type="common">Rice</name>
    <dbReference type="NCBI Taxonomy" id="39947"/>
    <lineage>
        <taxon>Eukaryota</taxon>
        <taxon>Viridiplantae</taxon>
        <taxon>Streptophyta</taxon>
        <taxon>Embryophyta</taxon>
        <taxon>Tracheophyta</taxon>
        <taxon>Spermatophyta</taxon>
        <taxon>Magnoliopsida</taxon>
        <taxon>Liliopsida</taxon>
        <taxon>Poales</taxon>
        <taxon>Poaceae</taxon>
        <taxon>BOP clade</taxon>
        <taxon>Oryzoideae</taxon>
        <taxon>Oryzeae</taxon>
        <taxon>Oryzinae</taxon>
        <taxon>Oryza</taxon>
        <taxon>Oryza sativa</taxon>
    </lineage>
</organism>